<gene>
    <name type="primary">UL27</name>
</gene>
<sequence>MNPVDQPPPPPLTQQPEEQAKEDHDDGDERLFRDPLTTYEYLDDCRDDEEFCHQFLRAYLTPIRNRQEAVRAGLLCRTPEDLAAAGGQKRKTPAPKHPKHAMVYIRRSCLVHSACATAHGKYDIRGLTLESDLAVWAALRGVPLPPDPQHFRWLNAGAFRRLVHEAQYLPEISRAAKRIALAVATGQYVVCTLLDYKTFGTRTHYLRQLCSMTEELYLRLDGTLCLFLEPEERELIGRCLPAALCRGLPVKYRTHRAAVFFHATFMARAEAALKDLYAAFCECGDGRDDGGNHNGNYGGGDHSSLSPSAVASHHSRLEHAELRLERNRHLGAFHLPAIRHLTAGDVARVQDSVSRDLGFADWSQTLVDDYFLLPAGWACANPRRGYAMYLASNAVLALRIIRLLRASIRHEYTACIRMLSGDVQRLIRLFKGEAALLRKGLAQNPVQRRELSRFRKHVHDLKRIRFTEDTFVETFCDFLELVQRIPDYRSVSLRIKRELLCLHVFKLRRGCRAPPTPEAVRVQRLLWHSLRHGDAPQDRTRLPQFSSALSDAELSNHANRCRRKAPLELGPAVVAAPGPSVRYRAHIQKFERLHVRRFRPHEVGGHAT</sequence>
<reference key="1">
    <citation type="journal article" date="2004" name="J. Gen. Virol.">
        <title>Genetic content of wild-type human cytomegalovirus.</title>
        <authorList>
            <person name="Dolan A."/>
            <person name="Cunningham C."/>
            <person name="Hector R.D."/>
            <person name="Hassan-Walker A.F."/>
            <person name="Lee L."/>
            <person name="Addison C."/>
            <person name="Dargan D.J."/>
            <person name="McGeoch D.J."/>
            <person name="Gatherer D."/>
            <person name="Emery V.C."/>
            <person name="Griffiths P.D."/>
            <person name="Sinzger C."/>
            <person name="McSharry B.P."/>
            <person name="Wilkinson G.W.G."/>
            <person name="Davison A.J."/>
        </authorList>
    </citation>
    <scope>NUCLEOTIDE SEQUENCE [LARGE SCALE GENOMIC DNA]</scope>
</reference>
<reference key="2">
    <citation type="journal article" date="2011" name="Antiviral Res.">
        <title>Resistance to maribavir is associated with the exclusion of pUL27 from nucleoli during human cytomegalovirus infection.</title>
        <authorList>
            <person name="Hakki M."/>
            <person name="Drummond C."/>
            <person name="Houser B."/>
            <person name="Marousek G."/>
            <person name="Chou S."/>
        </authorList>
    </citation>
    <scope>SUBCELLULAR LOCATION</scope>
</reference>
<reference key="3">
    <citation type="journal article" date="2011" name="Cell Host Microbe">
        <title>Antiviral inhibition targeting the HCMV kinase pUL97 requires pUL27-dependent proteasomal degradation of Tip60 acetyltransferase and cell-cycle arrest.</title>
        <authorList>
            <person name="Reitsma J.M."/>
            <person name="Savaryn J.P."/>
            <person name="Faust K."/>
            <person name="Sato H."/>
            <person name="Halligan B.D."/>
            <person name="Terhune S.S."/>
        </authorList>
    </citation>
    <scope>FUNCTION</scope>
    <scope>SUBCELLULAR LOCATION</scope>
    <scope>INTERACTION WITH HOST PSME3; KAT5 AND EP400</scope>
</reference>
<evidence type="ECO:0000256" key="1">
    <source>
        <dbReference type="SAM" id="MobiDB-lite"/>
    </source>
</evidence>
<evidence type="ECO:0000269" key="2">
    <source>
    </source>
</evidence>
<evidence type="ECO:0000269" key="3">
    <source>
    </source>
</evidence>
<evidence type="ECO:0000305" key="4"/>
<protein>
    <recommendedName>
        <fullName>Protein UL27</fullName>
    </recommendedName>
</protein>
<name>UL27_HCMVM</name>
<keyword id="KW-1077">G0/G1 host cell cycle checkpoint dysregulation by virus</keyword>
<keyword id="KW-1048">Host nucleus</keyword>
<keyword id="KW-0945">Host-virus interaction</keyword>
<keyword id="KW-1121">Modulation of host cell cycle by virus</keyword>
<keyword id="KW-1185">Reference proteome</keyword>
<dbReference type="EMBL" id="AY446894">
    <property type="protein sequence ID" value="AAR31592.1"/>
    <property type="molecule type" value="Genomic_DNA"/>
</dbReference>
<dbReference type="RefSeq" id="YP_081486.1">
    <property type="nucleotide sequence ID" value="NC_006273.2"/>
</dbReference>
<dbReference type="SMR" id="Q6SWA4"/>
<dbReference type="BioGRID" id="1678002">
    <property type="interactions" value="27"/>
</dbReference>
<dbReference type="GeneID" id="3077449"/>
<dbReference type="KEGG" id="vg:3077449"/>
<dbReference type="Reactome" id="R-HSA-9609690">
    <property type="pathway name" value="HCMV Early Events"/>
</dbReference>
<dbReference type="Proteomes" id="UP000000938">
    <property type="component" value="Segment"/>
</dbReference>
<dbReference type="GO" id="GO:0044196">
    <property type="term" value="C:host cell nucleolus"/>
    <property type="evidence" value="ECO:0007669"/>
    <property type="project" value="UniProtKB-SubCell"/>
</dbReference>
<dbReference type="GO" id="GO:0039646">
    <property type="term" value="P:symbiont-mediated perturbation of host cell cycle G0/G1 transition checkpoint"/>
    <property type="evidence" value="ECO:0007669"/>
    <property type="project" value="UniProtKB-KW"/>
</dbReference>
<dbReference type="GO" id="GO:0044071">
    <property type="term" value="P:symbiont-mediated perturbation of host cell cycle progression"/>
    <property type="evidence" value="ECO:0007669"/>
    <property type="project" value="UniProtKB-KW"/>
</dbReference>
<dbReference type="InterPro" id="IPR010302">
    <property type="entry name" value="UL27-like_protein_herpesevirus"/>
</dbReference>
<dbReference type="Pfam" id="PF05999">
    <property type="entry name" value="Herpes_U5"/>
    <property type="match status" value="1"/>
</dbReference>
<accession>Q6SWA4</accession>
<accession>D2K3J6</accession>
<feature type="chain" id="PRO_0000418281" description="Protein UL27">
    <location>
        <begin position="1"/>
        <end position="608"/>
    </location>
</feature>
<feature type="region of interest" description="Disordered" evidence="1">
    <location>
        <begin position="1"/>
        <end position="33"/>
    </location>
</feature>
<feature type="compositionally biased region" description="Pro residues" evidence="1">
    <location>
        <begin position="1"/>
        <end position="13"/>
    </location>
</feature>
<feature type="compositionally biased region" description="Basic and acidic residues" evidence="1">
    <location>
        <begin position="18"/>
        <end position="33"/>
    </location>
</feature>
<proteinExistence type="evidence at protein level"/>
<comment type="function">
    <text evidence="2">Promotes a cell cycle arrest in G0/G1 by inducing the proteasomal degradation of host histone acetyltransferase KAT5/Tip60.</text>
</comment>
<comment type="subunit">
    <text evidence="2">Interacts with host KAT5, PSME3 and EP400.</text>
</comment>
<comment type="subcellular location">
    <subcellularLocation>
        <location evidence="2">Host nucleus</location>
    </subcellularLocation>
    <subcellularLocation>
        <location evidence="3">Host nucleus</location>
        <location evidence="3">Host nucleolus</location>
    </subcellularLocation>
</comment>
<comment type="similarity">
    <text evidence="4">Belongs to the herpesviridae U4 family.</text>
</comment>
<organismHost>
    <name type="scientific">Homo sapiens</name>
    <name type="common">Human</name>
    <dbReference type="NCBI Taxonomy" id="9606"/>
</organismHost>
<organism>
    <name type="scientific">Human cytomegalovirus (strain Merlin)</name>
    <name type="common">HHV-5</name>
    <name type="synonym">Human herpesvirus 5</name>
    <dbReference type="NCBI Taxonomy" id="295027"/>
    <lineage>
        <taxon>Viruses</taxon>
        <taxon>Duplodnaviria</taxon>
        <taxon>Heunggongvirae</taxon>
        <taxon>Peploviricota</taxon>
        <taxon>Herviviricetes</taxon>
        <taxon>Herpesvirales</taxon>
        <taxon>Orthoherpesviridae</taxon>
        <taxon>Betaherpesvirinae</taxon>
        <taxon>Cytomegalovirus</taxon>
        <taxon>Cytomegalovirus humanbeta5</taxon>
        <taxon>Human cytomegalovirus</taxon>
    </lineage>
</organism>